<sequence length="280" mass="29963">MPAQILDGKKIAAEVRAEVKEEVSRLKAEGINPGLAVVLVGEDPASQVYVRNKHRACEEVGIYSEVHRLPAATSQAELLKLIDQLNKDPKIHGILVQLPLPDHIDEKKVIDAIALEKDVDGFSPANVGNLVIGDKCFYPCTPHGCMVLLEKAGIDPKGKKAVVVGRSNIVGKPVAMMLLARHATVTICHSRTRDLAAECRQADILIAAVGKPELITGDMIKEGAVVIDVGINRVGEKKLVGDVHFESAAQKAGWITPVPGGVGPMTIAMLLKNTVEAARR</sequence>
<reference key="1">
    <citation type="journal article" date="2008" name="Environ. Microbiol.">
        <title>The complete genome sequence of Moorella thermoacetica (f. Clostridium thermoaceticum).</title>
        <authorList>
            <person name="Pierce E."/>
            <person name="Xie G."/>
            <person name="Barabote R.D."/>
            <person name="Saunders E."/>
            <person name="Han C.S."/>
            <person name="Detter J.C."/>
            <person name="Richardson P."/>
            <person name="Brettin T.S."/>
            <person name="Das A."/>
            <person name="Ljungdahl L.G."/>
            <person name="Ragsdale S.W."/>
        </authorList>
    </citation>
    <scope>NUCLEOTIDE SEQUENCE [LARGE SCALE GENOMIC DNA]</scope>
    <source>
        <strain>ATCC 39073 / JCM 9320</strain>
    </source>
</reference>
<feature type="chain" id="PRO_0000268398" description="Bifunctional protein FolD">
    <location>
        <begin position="1"/>
        <end position="280"/>
    </location>
</feature>
<feature type="binding site" evidence="1">
    <location>
        <begin position="165"/>
        <end position="167"/>
    </location>
    <ligand>
        <name>NADP(+)</name>
        <dbReference type="ChEBI" id="CHEBI:58349"/>
    </ligand>
</feature>
<feature type="binding site" evidence="1">
    <location>
        <position position="190"/>
    </location>
    <ligand>
        <name>NADP(+)</name>
        <dbReference type="ChEBI" id="CHEBI:58349"/>
    </ligand>
</feature>
<feature type="binding site" evidence="1">
    <location>
        <position position="231"/>
    </location>
    <ligand>
        <name>NADP(+)</name>
        <dbReference type="ChEBI" id="CHEBI:58349"/>
    </ligand>
</feature>
<proteinExistence type="inferred from homology"/>
<protein>
    <recommendedName>
        <fullName evidence="1">Bifunctional protein FolD</fullName>
    </recommendedName>
    <domain>
        <recommendedName>
            <fullName evidence="1">Methylenetetrahydrofolate dehydrogenase</fullName>
            <ecNumber evidence="1">1.5.1.5</ecNumber>
        </recommendedName>
    </domain>
    <domain>
        <recommendedName>
            <fullName evidence="1">Methenyltetrahydrofolate cyclohydrolase</fullName>
            <ecNumber evidence="1">3.5.4.9</ecNumber>
        </recommendedName>
    </domain>
</protein>
<dbReference type="EC" id="1.5.1.5" evidence="1"/>
<dbReference type="EC" id="3.5.4.9" evidence="1"/>
<dbReference type="EMBL" id="CP000232">
    <property type="protein sequence ID" value="ABC19825.1"/>
    <property type="molecule type" value="Genomic_DNA"/>
</dbReference>
<dbReference type="RefSeq" id="YP_430368.1">
    <property type="nucleotide sequence ID" value="NC_007644.1"/>
</dbReference>
<dbReference type="SMR" id="Q2RIB4"/>
<dbReference type="STRING" id="264732.Moth_1516"/>
<dbReference type="EnsemblBacteria" id="ABC19825">
    <property type="protein sequence ID" value="ABC19825"/>
    <property type="gene ID" value="Moth_1516"/>
</dbReference>
<dbReference type="KEGG" id="mta:Moth_1516"/>
<dbReference type="PATRIC" id="fig|264732.11.peg.1642"/>
<dbReference type="eggNOG" id="COG0190">
    <property type="taxonomic scope" value="Bacteria"/>
</dbReference>
<dbReference type="HOGENOM" id="CLU_034045_2_1_9"/>
<dbReference type="OrthoDB" id="9803580at2"/>
<dbReference type="BioCyc" id="MetaCyc:CYCLODEHYCLTH-MONOMER"/>
<dbReference type="UniPathway" id="UPA00193"/>
<dbReference type="GO" id="GO:0005829">
    <property type="term" value="C:cytosol"/>
    <property type="evidence" value="ECO:0007669"/>
    <property type="project" value="TreeGrafter"/>
</dbReference>
<dbReference type="GO" id="GO:0004477">
    <property type="term" value="F:methenyltetrahydrofolate cyclohydrolase activity"/>
    <property type="evidence" value="ECO:0007669"/>
    <property type="project" value="UniProtKB-UniRule"/>
</dbReference>
<dbReference type="GO" id="GO:0004488">
    <property type="term" value="F:methylenetetrahydrofolate dehydrogenase (NADP+) activity"/>
    <property type="evidence" value="ECO:0007669"/>
    <property type="project" value="UniProtKB-UniRule"/>
</dbReference>
<dbReference type="GO" id="GO:0000105">
    <property type="term" value="P:L-histidine biosynthetic process"/>
    <property type="evidence" value="ECO:0007669"/>
    <property type="project" value="UniProtKB-KW"/>
</dbReference>
<dbReference type="GO" id="GO:0009086">
    <property type="term" value="P:methionine biosynthetic process"/>
    <property type="evidence" value="ECO:0007669"/>
    <property type="project" value="UniProtKB-KW"/>
</dbReference>
<dbReference type="GO" id="GO:0006164">
    <property type="term" value="P:purine nucleotide biosynthetic process"/>
    <property type="evidence" value="ECO:0007669"/>
    <property type="project" value="UniProtKB-KW"/>
</dbReference>
<dbReference type="GO" id="GO:0035999">
    <property type="term" value="P:tetrahydrofolate interconversion"/>
    <property type="evidence" value="ECO:0007669"/>
    <property type="project" value="UniProtKB-UniRule"/>
</dbReference>
<dbReference type="CDD" id="cd01080">
    <property type="entry name" value="NAD_bind_m-THF_DH_Cyclohyd"/>
    <property type="match status" value="1"/>
</dbReference>
<dbReference type="FunFam" id="3.40.50.10860:FF:000001">
    <property type="entry name" value="Bifunctional protein FolD"/>
    <property type="match status" value="1"/>
</dbReference>
<dbReference type="FunFam" id="3.40.50.720:FF:000094">
    <property type="entry name" value="Bifunctional protein FolD"/>
    <property type="match status" value="1"/>
</dbReference>
<dbReference type="Gene3D" id="3.40.50.10860">
    <property type="entry name" value="Leucine Dehydrogenase, chain A, domain 1"/>
    <property type="match status" value="1"/>
</dbReference>
<dbReference type="Gene3D" id="3.40.50.720">
    <property type="entry name" value="NAD(P)-binding Rossmann-like Domain"/>
    <property type="match status" value="1"/>
</dbReference>
<dbReference type="HAMAP" id="MF_01576">
    <property type="entry name" value="THF_DHG_CYH"/>
    <property type="match status" value="1"/>
</dbReference>
<dbReference type="InterPro" id="IPR046346">
    <property type="entry name" value="Aminoacid_DH-like_N_sf"/>
</dbReference>
<dbReference type="InterPro" id="IPR036291">
    <property type="entry name" value="NAD(P)-bd_dom_sf"/>
</dbReference>
<dbReference type="InterPro" id="IPR000672">
    <property type="entry name" value="THF_DH/CycHdrlase"/>
</dbReference>
<dbReference type="InterPro" id="IPR020630">
    <property type="entry name" value="THF_DH/CycHdrlase_cat_dom"/>
</dbReference>
<dbReference type="InterPro" id="IPR020867">
    <property type="entry name" value="THF_DH/CycHdrlase_CS"/>
</dbReference>
<dbReference type="InterPro" id="IPR020631">
    <property type="entry name" value="THF_DH/CycHdrlase_NAD-bd_dom"/>
</dbReference>
<dbReference type="NCBIfam" id="NF008058">
    <property type="entry name" value="PRK10792.1"/>
    <property type="match status" value="1"/>
</dbReference>
<dbReference type="NCBIfam" id="NF010783">
    <property type="entry name" value="PRK14186.1"/>
    <property type="match status" value="1"/>
</dbReference>
<dbReference type="NCBIfam" id="NF010785">
    <property type="entry name" value="PRK14188.1"/>
    <property type="match status" value="1"/>
</dbReference>
<dbReference type="NCBIfam" id="NF010786">
    <property type="entry name" value="PRK14189.1"/>
    <property type="match status" value="1"/>
</dbReference>
<dbReference type="PANTHER" id="PTHR48099:SF5">
    <property type="entry name" value="C-1-TETRAHYDROFOLATE SYNTHASE, CYTOPLASMIC"/>
    <property type="match status" value="1"/>
</dbReference>
<dbReference type="PANTHER" id="PTHR48099">
    <property type="entry name" value="C-1-TETRAHYDROFOLATE SYNTHASE, CYTOPLASMIC-RELATED"/>
    <property type="match status" value="1"/>
</dbReference>
<dbReference type="Pfam" id="PF00763">
    <property type="entry name" value="THF_DHG_CYH"/>
    <property type="match status" value="1"/>
</dbReference>
<dbReference type="Pfam" id="PF02882">
    <property type="entry name" value="THF_DHG_CYH_C"/>
    <property type="match status" value="1"/>
</dbReference>
<dbReference type="PRINTS" id="PR00085">
    <property type="entry name" value="THFDHDRGNASE"/>
</dbReference>
<dbReference type="SUPFAM" id="SSF53223">
    <property type="entry name" value="Aminoacid dehydrogenase-like, N-terminal domain"/>
    <property type="match status" value="1"/>
</dbReference>
<dbReference type="SUPFAM" id="SSF51735">
    <property type="entry name" value="NAD(P)-binding Rossmann-fold domains"/>
    <property type="match status" value="1"/>
</dbReference>
<dbReference type="PROSITE" id="PS00766">
    <property type="entry name" value="THF_DHG_CYH_1"/>
    <property type="match status" value="1"/>
</dbReference>
<dbReference type="PROSITE" id="PS00767">
    <property type="entry name" value="THF_DHG_CYH_2"/>
    <property type="match status" value="1"/>
</dbReference>
<keyword id="KW-0028">Amino-acid biosynthesis</keyword>
<keyword id="KW-0368">Histidine biosynthesis</keyword>
<keyword id="KW-0378">Hydrolase</keyword>
<keyword id="KW-0486">Methionine biosynthesis</keyword>
<keyword id="KW-0511">Multifunctional enzyme</keyword>
<keyword id="KW-0521">NADP</keyword>
<keyword id="KW-0554">One-carbon metabolism</keyword>
<keyword id="KW-0560">Oxidoreductase</keyword>
<keyword id="KW-0658">Purine biosynthesis</keyword>
<comment type="function">
    <text evidence="1">Catalyzes the oxidation of 5,10-methylenetetrahydrofolate to 5,10-methenyltetrahydrofolate and then the hydrolysis of 5,10-methenyltetrahydrofolate to 10-formyltetrahydrofolate.</text>
</comment>
<comment type="catalytic activity">
    <reaction evidence="1">
        <text>(6R)-5,10-methylene-5,6,7,8-tetrahydrofolate + NADP(+) = (6R)-5,10-methenyltetrahydrofolate + NADPH</text>
        <dbReference type="Rhea" id="RHEA:22812"/>
        <dbReference type="ChEBI" id="CHEBI:15636"/>
        <dbReference type="ChEBI" id="CHEBI:57455"/>
        <dbReference type="ChEBI" id="CHEBI:57783"/>
        <dbReference type="ChEBI" id="CHEBI:58349"/>
        <dbReference type="EC" id="1.5.1.5"/>
    </reaction>
</comment>
<comment type="catalytic activity">
    <reaction evidence="1">
        <text>(6R)-5,10-methenyltetrahydrofolate + H2O = (6R)-10-formyltetrahydrofolate + H(+)</text>
        <dbReference type="Rhea" id="RHEA:23700"/>
        <dbReference type="ChEBI" id="CHEBI:15377"/>
        <dbReference type="ChEBI" id="CHEBI:15378"/>
        <dbReference type="ChEBI" id="CHEBI:57455"/>
        <dbReference type="ChEBI" id="CHEBI:195366"/>
        <dbReference type="EC" id="3.5.4.9"/>
    </reaction>
</comment>
<comment type="pathway">
    <text evidence="1">One-carbon metabolism; tetrahydrofolate interconversion.</text>
</comment>
<comment type="subunit">
    <text evidence="1">Homodimer.</text>
</comment>
<comment type="similarity">
    <text evidence="1">Belongs to the tetrahydrofolate dehydrogenase/cyclohydrolase family.</text>
</comment>
<accession>Q2RIB4</accession>
<evidence type="ECO:0000255" key="1">
    <source>
        <dbReference type="HAMAP-Rule" id="MF_01576"/>
    </source>
</evidence>
<gene>
    <name evidence="1" type="primary">folD</name>
    <name type="ordered locus">Moth_1516</name>
</gene>
<name>FOLD_MOOTA</name>
<organism>
    <name type="scientific">Moorella thermoacetica (strain ATCC 39073 / JCM 9320)</name>
    <dbReference type="NCBI Taxonomy" id="264732"/>
    <lineage>
        <taxon>Bacteria</taxon>
        <taxon>Bacillati</taxon>
        <taxon>Bacillota</taxon>
        <taxon>Clostridia</taxon>
        <taxon>Moorellales</taxon>
        <taxon>Moorellaceae</taxon>
        <taxon>Moorella</taxon>
    </lineage>
</organism>